<sequence length="2325" mass="259165">MRNRLLLIFYTTTVLWTIGYTQLVLGKPPIFQDGGSVEQKVAVEGEIIRLKCDDAELAEQYEWRIGDASGELIATSKFCEVQASRVNDEKKYRCVARNTVGAAISPPSMVRSKYLDDFDASDESVQYEVTTGVGRYFVLRRPTLLASRNLDISYSWIKDDSHQVTPDATHFVTSDGNLVVTGVKRDDFGAYKLMASSDDLKEIVSKEYNVRDNGLSPSLQNTLSIVYFPTDRTIIESTLPHDEIFDCVTSFGSKDDVRIRWFLNGQQISGSEVGMTTTLNNRRLIISNPSSFTRGEHKLECRADAAMGRTSDQKSAYMTFISRPILKDLPNEIQKTVGSSLSLKCSVKKKSSMDIKWYKNGLMMTTQRGKLTIDRIKQDDFGLYQCEATNAAGADLASVWVKEGEANETVATEMSEDGMSLEEEISMETPPPRKLKFFDNSKSQEQLFPFTSELEPSQKLIKTPKDLTVASGTDRIMMECAATGSPPPNIIWLLNGHEIQTDNVKYDLTNDGLAIHDIRKSDEGEYTCEISGSNVKATANVQVNGDSLIEYGPADQKSLIGTNVEFSCEVAKEYVRKASVEWYLNDVLLPVNGNSGLRISRNRKGSLIIRQVGPDNTGEYRCRVTVDGREENASAMLQIIEKPAMPERVRAELHNETMPAKVRVRWNEGFDGNEPIIKHAIEMRTMGPTGLWSDWTTAIDNIPKEEGKPCCWTDIEDLRPSSTAEFRVVASNKHGPGKPSLPSYSVTMPQQPPSAAPRNVAASARSPHSVMVQWQQPKEELDSGDVLGYVVRYRLAGYSSLTWNEKNLTTKDARNTLVDELITWREYEIQVAAYNKRGLGVFSESIEVTTSEGRPTQAPKNVRVKVLNSTAVAIEFTAPEQQRIPGVNLGYKVQFWKGEPEKGELYKQVILDPDRRQLTTVVNELEKFGHYNLTTLCFTTPGDGPRSNVVKVVTEEDTPESVDELSIAEVMYNGAVITWNSPLKQNGIVTKYTIRHWAASSPDVKTKHEVDGSTTNFTIDGLQPSTRYGVDVMASTRKGDGPVEETKFESGVPPELPGRPSMLSIGDISATTVQLHFTPGFDGHTAIRQWVVEGKMADSSVFAHVFNVSAPKARSITVTGLRPFTQYQLRLIAENVKGRGAPSEPSRSFETLQTNPDTPSQRLFAEPVSATSISVSWTPLLATHWNGQPKGYLIVYREIDDENWKEVRTPALRSSEHTVTDLRPFTSYEVNVFSENGFGRSLPTDSVKARTYESVPSGSPRNIVVTAEGSKAAIIKWNPVAELSTNGDVIGYKLRVVPERESLMADETKVIDIPGQSTLMAKVSDLRPFTSYHVYMSAYTIVGNGPENSTPISFETMEDVPAPPESFQCSYISEQEVRMKWLPPGSPNGKITNYIISYWKSHEPRSMAIDAPLLGNLLMFAAMSLNPNTQYTFAIKARNSKGESEEAVAEVMTSSVRLPVRNAPAPVRDTLSQHQATEIIIRWDESLPRKLTEDAESPVRAVQVSYQKTNEDEWITLEKKFEYSKRRSVIKHLSPNSMFRFRIRFIGDFLESSWSPESEWMRTLPSAPFAQPISLKATPYERNSVQLEWVVPHKSTWNSDAIGYRIHYREYPSNETWQMEEIAIRDEHEDKEEKILAKLDSFKHYILRMRIFNSEGEGPFSAPVFAYVGYSIPKRNLNNIITEPLSSSSIRVKWDAWPKEDSETITSFKVRYVPVASVLSSVSSEEEIMIVDTNECTLNDLRKFTEYQISVSPYNRAGEGKMSQVRDKTLEDKPGPVGILRFSDVLMDSVKVSWDEPSQPNGNVIGYIVNYKGYRMQEEFKNEDQQRTSRNYFDTHGLAEGVTYFFSVWAETSAGKGEQRSANVTIGPSKDGPPPPSKPQITSGQSYVTLNWNDVADSDEIVGHLLQAKRVSVAEEAPANGYVSQRPRRNEIKGAKSAAQTAAATSTRPTHPIGEWITLRPTEGRSEKEQVSYRELQPSSYYAFRVFTRNVRGIGMASVETEQLFVPESIPDDPFYTTWWFMALVAMGAFVLIVIIIAILCVTGSSAKYRREKRSRSIDSLQLADGNFASFQLKGTSAANMTRSRELPTRPGTTQSWVSDQSREPPAYGSVLGGSRNSGGVMNMYGLATDVIPPLPNSGPPHTSVEAMQKLSALVGRDIRSQNTAYVTPSARGGSDNGRNEYMPTRSDLYATRSEYGRVEYRGHIPSSSGGSGAGSQPQGSPLQQPEVYDSFDEEEDVVDDDTVIRGDRTMTDGVDDIARHYGSTDQYRDTWRKVRDTDMVRAPILTGHPSSAAGRSSTTDSTSEGPWANIPATPNLTTGFSSFV</sequence>
<dbReference type="EMBL" id="FO080677">
    <property type="protein sequence ID" value="CCD65705.1"/>
    <property type="molecule type" value="Genomic_DNA"/>
</dbReference>
<dbReference type="RefSeq" id="NP_501339.2">
    <property type="nucleotide sequence ID" value="NM_068938.9"/>
</dbReference>
<dbReference type="FunCoup" id="Q9N3X8">
    <property type="interactions" value="1013"/>
</dbReference>
<dbReference type="STRING" id="6239.Y42H9B.2.2"/>
<dbReference type="GlyCosmos" id="Q9N3X8">
    <property type="glycosylation" value="10 sites, No reported glycans"/>
</dbReference>
<dbReference type="iPTMnet" id="Q9N3X8"/>
<dbReference type="PaxDb" id="6239-Y42H9B.2"/>
<dbReference type="PeptideAtlas" id="Q9N3X8"/>
<dbReference type="EnsemblMetazoa" id="Y42H9B.2.1">
    <property type="protein sequence ID" value="Y42H9B.2.1"/>
    <property type="gene ID" value="WBGene00004371"/>
</dbReference>
<dbReference type="GeneID" id="177597"/>
<dbReference type="KEGG" id="cel:CELE_Y42H9B.2"/>
<dbReference type="UCSC" id="Y42H9B.2">
    <property type="organism name" value="c. elegans"/>
</dbReference>
<dbReference type="AGR" id="WB:WBGene00004371"/>
<dbReference type="CTD" id="177597"/>
<dbReference type="WormBase" id="Y42H9B.2">
    <property type="protein sequence ID" value="CE33870"/>
    <property type="gene ID" value="WBGene00004371"/>
    <property type="gene designation" value="rig-4"/>
</dbReference>
<dbReference type="eggNOG" id="KOG3510">
    <property type="taxonomic scope" value="Eukaryota"/>
</dbReference>
<dbReference type="HOGENOM" id="CLU_001875_1_0_1"/>
<dbReference type="InParanoid" id="Q9N3X8"/>
<dbReference type="OMA" id="EWVVPHK"/>
<dbReference type="OrthoDB" id="8923679at2759"/>
<dbReference type="PhylomeDB" id="Q9N3X8"/>
<dbReference type="Reactome" id="R-CEL-373756">
    <property type="pathway name" value="SDK interactions"/>
</dbReference>
<dbReference type="PRO" id="PR:Q9N3X8"/>
<dbReference type="Proteomes" id="UP000001940">
    <property type="component" value="Chromosome IV"/>
</dbReference>
<dbReference type="Bgee" id="WBGene00004371">
    <property type="expression patterns" value="Expressed in pharyngeal muscle cell (C elegans) and 4 other cell types or tissues"/>
</dbReference>
<dbReference type="GO" id="GO:0016020">
    <property type="term" value="C:membrane"/>
    <property type="evidence" value="ECO:0007669"/>
    <property type="project" value="UniProtKB-SubCell"/>
</dbReference>
<dbReference type="GO" id="GO:0045202">
    <property type="term" value="C:synapse"/>
    <property type="evidence" value="ECO:0000318"/>
    <property type="project" value="GO_Central"/>
</dbReference>
<dbReference type="GO" id="GO:0007156">
    <property type="term" value="P:homophilic cell adhesion via plasma membrane adhesion molecules"/>
    <property type="evidence" value="ECO:0000318"/>
    <property type="project" value="GO_Central"/>
</dbReference>
<dbReference type="GO" id="GO:0007416">
    <property type="term" value="P:synapse assembly"/>
    <property type="evidence" value="ECO:0000318"/>
    <property type="project" value="GO_Central"/>
</dbReference>
<dbReference type="CDD" id="cd00063">
    <property type="entry name" value="FN3"/>
    <property type="match status" value="12"/>
</dbReference>
<dbReference type="CDD" id="cd00096">
    <property type="entry name" value="Ig"/>
    <property type="match status" value="1"/>
</dbReference>
<dbReference type="FunFam" id="2.60.40.10:FF:002281">
    <property type="entry name" value="Protein sidekick homolog"/>
    <property type="match status" value="1"/>
</dbReference>
<dbReference type="FunFam" id="2.60.40.10:FF:002285">
    <property type="entry name" value="Protein sidekick homolog"/>
    <property type="match status" value="1"/>
</dbReference>
<dbReference type="FunFam" id="2.60.40.10:FF:002289">
    <property type="entry name" value="Protein sidekick homolog"/>
    <property type="match status" value="1"/>
</dbReference>
<dbReference type="FunFam" id="2.60.40.10:FF:002417">
    <property type="entry name" value="Protein sidekick homolog"/>
    <property type="match status" value="1"/>
</dbReference>
<dbReference type="FunFam" id="2.60.40.10:FF:002422">
    <property type="entry name" value="Protein sidekick homolog"/>
    <property type="match status" value="1"/>
</dbReference>
<dbReference type="FunFam" id="2.60.40.10:FF:002518">
    <property type="entry name" value="Protein sidekick homolog"/>
    <property type="match status" value="1"/>
</dbReference>
<dbReference type="FunFam" id="2.60.40.10:FF:002914">
    <property type="entry name" value="Protein sidekick homolog"/>
    <property type="match status" value="1"/>
</dbReference>
<dbReference type="FunFam" id="2.60.40.10:FF:000158">
    <property type="entry name" value="Sidekick cell adhesion molecule 2"/>
    <property type="match status" value="1"/>
</dbReference>
<dbReference type="FunFam" id="2.60.40.10:FF:001132">
    <property type="entry name" value="Sidekick, isoform B"/>
    <property type="match status" value="1"/>
</dbReference>
<dbReference type="Gene3D" id="2.60.40.10">
    <property type="entry name" value="Immunoglobulins"/>
    <property type="match status" value="17"/>
</dbReference>
<dbReference type="InterPro" id="IPR003961">
    <property type="entry name" value="FN3_dom"/>
</dbReference>
<dbReference type="InterPro" id="IPR036116">
    <property type="entry name" value="FN3_sf"/>
</dbReference>
<dbReference type="InterPro" id="IPR007110">
    <property type="entry name" value="Ig-like_dom"/>
</dbReference>
<dbReference type="InterPro" id="IPR036179">
    <property type="entry name" value="Ig-like_dom_sf"/>
</dbReference>
<dbReference type="InterPro" id="IPR013783">
    <property type="entry name" value="Ig-like_fold"/>
</dbReference>
<dbReference type="InterPro" id="IPR013098">
    <property type="entry name" value="Ig_I-set"/>
</dbReference>
<dbReference type="InterPro" id="IPR003599">
    <property type="entry name" value="Ig_sub"/>
</dbReference>
<dbReference type="InterPro" id="IPR003598">
    <property type="entry name" value="Ig_sub2"/>
</dbReference>
<dbReference type="InterPro" id="IPR050964">
    <property type="entry name" value="Striated_Muscle_Regulatory"/>
</dbReference>
<dbReference type="PANTHER" id="PTHR13817:SF166">
    <property type="entry name" value="NEURONAL IGCAM-RELATED"/>
    <property type="match status" value="1"/>
</dbReference>
<dbReference type="PANTHER" id="PTHR13817">
    <property type="entry name" value="TITIN"/>
    <property type="match status" value="1"/>
</dbReference>
<dbReference type="Pfam" id="PF00041">
    <property type="entry name" value="fn3"/>
    <property type="match status" value="9"/>
</dbReference>
<dbReference type="Pfam" id="PF07679">
    <property type="entry name" value="I-set"/>
    <property type="match status" value="3"/>
</dbReference>
<dbReference type="PRINTS" id="PR00014">
    <property type="entry name" value="FNTYPEIII"/>
</dbReference>
<dbReference type="SMART" id="SM00060">
    <property type="entry name" value="FN3"/>
    <property type="match status" value="13"/>
</dbReference>
<dbReference type="SMART" id="SM00409">
    <property type="entry name" value="IG"/>
    <property type="match status" value="4"/>
</dbReference>
<dbReference type="SMART" id="SM00408">
    <property type="entry name" value="IGc2"/>
    <property type="match status" value="4"/>
</dbReference>
<dbReference type="SUPFAM" id="SSF49265">
    <property type="entry name" value="Fibronectin type III"/>
    <property type="match status" value="7"/>
</dbReference>
<dbReference type="SUPFAM" id="SSF48726">
    <property type="entry name" value="Immunoglobulin"/>
    <property type="match status" value="4"/>
</dbReference>
<dbReference type="PROSITE" id="PS50853">
    <property type="entry name" value="FN3"/>
    <property type="match status" value="12"/>
</dbReference>
<dbReference type="PROSITE" id="PS50835">
    <property type="entry name" value="IG_LIKE"/>
    <property type="match status" value="5"/>
</dbReference>
<reference key="1">
    <citation type="journal article" date="1998" name="Science">
        <title>Genome sequence of the nematode C. elegans: a platform for investigating biology.</title>
        <authorList>
            <consortium name="The C. elegans sequencing consortium"/>
        </authorList>
    </citation>
    <scope>NUCLEOTIDE SEQUENCE [LARGE SCALE GENOMIC DNA]</scope>
    <source>
        <strain>Bristol N2</strain>
    </source>
</reference>
<reference key="2">
    <citation type="journal article" date="2003" name="Nat. Biotechnol.">
        <title>Lectin affinity capture, isotope-coded tagging and mass spectrometry to identify N-linked glycoproteins.</title>
        <authorList>
            <person name="Kaji H."/>
            <person name="Saito H."/>
            <person name="Yamauchi Y."/>
            <person name="Shinkawa T."/>
            <person name="Taoka M."/>
            <person name="Hirabayashi J."/>
            <person name="Kasai K."/>
            <person name="Takahashi N."/>
            <person name="Isobe T."/>
        </authorList>
    </citation>
    <scope>GLYCOSYLATION [LARGE SCALE ANALYSIS] AT ASN-932</scope>
    <scope>IDENTIFICATION BY MASS SPECTROMETRY</scope>
    <source>
        <strain>Bristol N2</strain>
    </source>
</reference>
<reference key="3">
    <citation type="journal article" date="2007" name="Mol. Cell. Proteomics">
        <title>Proteomics reveals N-linked glycoprotein diversity in Caenorhabditis elegans and suggests an atypical translocation mechanism for integral membrane proteins.</title>
        <authorList>
            <person name="Kaji H."/>
            <person name="Kamiie J."/>
            <person name="Kawakami H."/>
            <person name="Kido K."/>
            <person name="Yamauchi Y."/>
            <person name="Shinkawa T."/>
            <person name="Taoka M."/>
            <person name="Takahashi N."/>
            <person name="Isobe T."/>
        </authorList>
    </citation>
    <scope>GLYCOSYLATION [LARGE SCALE ANALYSIS] AT ASN-932 AND ASN-1016</scope>
    <scope>IDENTIFICATION BY MASS SPECTROMETRY</scope>
    <source>
        <strain>Bristol N2</strain>
    </source>
</reference>
<organism>
    <name type="scientific">Caenorhabditis elegans</name>
    <dbReference type="NCBI Taxonomy" id="6239"/>
    <lineage>
        <taxon>Eukaryota</taxon>
        <taxon>Metazoa</taxon>
        <taxon>Ecdysozoa</taxon>
        <taxon>Nematoda</taxon>
        <taxon>Chromadorea</taxon>
        <taxon>Rhabditida</taxon>
        <taxon>Rhabditina</taxon>
        <taxon>Rhabditomorpha</taxon>
        <taxon>Rhabditoidea</taxon>
        <taxon>Rhabditidae</taxon>
        <taxon>Peloderinae</taxon>
        <taxon>Caenorhabditis</taxon>
    </lineage>
</organism>
<comment type="function">
    <text evidence="1">Cell adhesion protein.</text>
</comment>
<comment type="subcellular location">
    <subcellularLocation>
        <location evidence="8">Membrane</location>
        <topology evidence="8">Single-pass type I membrane protein</topology>
    </subcellularLocation>
</comment>
<comment type="similarity">
    <text evidence="8">Belongs to the sidekick family.</text>
</comment>
<accession>Q9N3X8</accession>
<name>SDK_CAEEL</name>
<gene>
    <name type="primary">rig-4</name>
    <name type="ORF">Y42H9B.2</name>
</gene>
<feature type="signal peptide" evidence="2">
    <location>
        <begin position="1"/>
        <end position="26"/>
    </location>
</feature>
<feature type="chain" id="PRO_0000226982" description="Protein sidekick homolog">
    <location>
        <begin position="27"/>
        <end position="2325"/>
    </location>
</feature>
<feature type="topological domain" description="Extracellular" evidence="2">
    <location>
        <begin position="27"/>
        <end position="2019"/>
    </location>
</feature>
<feature type="transmembrane region" description="Helical" evidence="2">
    <location>
        <begin position="2020"/>
        <end position="2040"/>
    </location>
</feature>
<feature type="topological domain" description="Cytoplasmic" evidence="2">
    <location>
        <begin position="2041"/>
        <end position="2325"/>
    </location>
</feature>
<feature type="domain" description="Ig-like C2-type 1">
    <location>
        <begin position="28"/>
        <end position="105"/>
    </location>
</feature>
<feature type="domain" description="Ig-like C2-type 2">
    <location>
        <begin position="217"/>
        <end position="319"/>
    </location>
</feature>
<feature type="domain" description="Ig-like C2-type 3">
    <location>
        <begin position="324"/>
        <end position="397"/>
    </location>
</feature>
<feature type="domain" description="Ig-like C2-type 4">
    <location>
        <begin position="456"/>
        <end position="544"/>
    </location>
</feature>
<feature type="domain" description="Ig-like C2-type 5">
    <location>
        <begin position="547"/>
        <end position="638"/>
    </location>
</feature>
<feature type="domain" description="Fibronectin type-III 1" evidence="4">
    <location>
        <begin position="645"/>
        <end position="751"/>
    </location>
</feature>
<feature type="domain" description="Fibronectin type-III 2" evidence="4">
    <location>
        <begin position="756"/>
        <end position="853"/>
    </location>
</feature>
<feature type="domain" description="Fibronectin type-III 3" evidence="4">
    <location>
        <begin position="858"/>
        <end position="957"/>
    </location>
</feature>
<feature type="domain" description="Fibronectin type-III 4" evidence="4">
    <location>
        <begin position="961"/>
        <end position="1055"/>
    </location>
</feature>
<feature type="domain" description="Fibronectin type-III 5" evidence="4">
    <location>
        <begin position="1059"/>
        <end position="1154"/>
    </location>
</feature>
<feature type="domain" description="Fibronectin type-III 6" evidence="4">
    <location>
        <begin position="1159"/>
        <end position="1254"/>
    </location>
</feature>
<feature type="domain" description="Fibronectin type-III 7" evidence="4">
    <location>
        <begin position="1259"/>
        <end position="1359"/>
    </location>
</feature>
<feature type="domain" description="Fibronectin type-III 8" evidence="4">
    <location>
        <begin position="1363"/>
        <end position="1457"/>
    </location>
</feature>
<feature type="domain" description="Fibronectin type-III 9" evidence="4">
    <location>
        <begin position="1463"/>
        <end position="1566"/>
    </location>
</feature>
<feature type="domain" description="Fibronectin type-III 10" evidence="4">
    <location>
        <begin position="1571"/>
        <end position="1671"/>
    </location>
</feature>
<feature type="domain" description="Fibronectin type-III 11" evidence="4">
    <location>
        <begin position="1673"/>
        <end position="1775"/>
    </location>
</feature>
<feature type="domain" description="Fibronectin type-III 12" evidence="4">
    <location>
        <begin position="1776"/>
        <end position="1872"/>
    </location>
</feature>
<feature type="domain" description="Fibronectin type-III 13" evidence="4">
    <location>
        <begin position="1873"/>
        <end position="2004"/>
    </location>
</feature>
<feature type="region of interest" description="Disordered" evidence="5">
    <location>
        <begin position="1036"/>
        <end position="1059"/>
    </location>
</feature>
<feature type="region of interest" description="Disordered" evidence="5">
    <location>
        <begin position="1137"/>
        <end position="1161"/>
    </location>
</feature>
<feature type="region of interest" description="Disordered" evidence="5">
    <location>
        <begin position="1857"/>
        <end position="1884"/>
    </location>
</feature>
<feature type="region of interest" description="Disordered" evidence="5">
    <location>
        <begin position="1918"/>
        <end position="1947"/>
    </location>
</feature>
<feature type="region of interest" description="Disordered" evidence="5">
    <location>
        <begin position="2080"/>
        <end position="2113"/>
    </location>
</feature>
<feature type="region of interest" description="Disordered" evidence="5">
    <location>
        <begin position="2164"/>
        <end position="2187"/>
    </location>
</feature>
<feature type="region of interest" description="Disordered" evidence="5">
    <location>
        <begin position="2202"/>
        <end position="2226"/>
    </location>
</feature>
<feature type="region of interest" description="Disordered" evidence="5">
    <location>
        <begin position="2285"/>
        <end position="2325"/>
    </location>
</feature>
<feature type="compositionally biased region" description="Basic and acidic residues" evidence="5">
    <location>
        <begin position="1037"/>
        <end position="1048"/>
    </location>
</feature>
<feature type="compositionally biased region" description="Polar residues" evidence="5">
    <location>
        <begin position="1145"/>
        <end position="1161"/>
    </location>
</feature>
<feature type="compositionally biased region" description="Low complexity" evidence="5">
    <location>
        <begin position="1935"/>
        <end position="1947"/>
    </location>
</feature>
<feature type="compositionally biased region" description="Polar residues" evidence="5">
    <location>
        <begin position="2091"/>
        <end position="2100"/>
    </location>
</feature>
<feature type="compositionally biased region" description="Low complexity" evidence="5">
    <location>
        <begin position="2215"/>
        <end position="2226"/>
    </location>
</feature>
<feature type="compositionally biased region" description="Polar residues" evidence="5">
    <location>
        <begin position="2294"/>
        <end position="2305"/>
    </location>
</feature>
<feature type="compositionally biased region" description="Polar residues" evidence="5">
    <location>
        <begin position="2313"/>
        <end position="2325"/>
    </location>
</feature>
<feature type="glycosylation site" description="N-linked (GlcNAc...) asparagine" evidence="2">
    <location>
        <position position="407"/>
    </location>
</feature>
<feature type="glycosylation site" description="N-linked (GlcNAc...) asparagine" evidence="2">
    <location>
        <position position="632"/>
    </location>
</feature>
<feature type="glycosylation site" description="N-linked (GlcNAc...) asparagine" evidence="2">
    <location>
        <position position="655"/>
    </location>
</feature>
<feature type="glycosylation site" description="N-linked (GlcNAc...) asparagine" evidence="2">
    <location>
        <position position="807"/>
    </location>
</feature>
<feature type="glycosylation site" description="N-linked (GlcNAc...) asparagine" evidence="2">
    <location>
        <position position="868"/>
    </location>
</feature>
<feature type="glycosylation site" description="N-linked (GlcNAc...) asparagine" evidence="6 7">
    <location>
        <position position="932"/>
    </location>
</feature>
<feature type="glycosylation site" description="N-linked (GlcNAc...) asparagine" evidence="7">
    <location>
        <position position="1016"/>
    </location>
</feature>
<feature type="glycosylation site" description="N-linked (GlcNAc...) asparagine" evidence="2">
    <location>
        <position position="1107"/>
    </location>
</feature>
<feature type="glycosylation site" description="N-linked (GlcNAc...) asparagine" evidence="2">
    <location>
        <position position="1614"/>
    </location>
</feature>
<feature type="glycosylation site" description="N-linked (GlcNAc...) asparagine" evidence="2">
    <location>
        <position position="1863"/>
    </location>
</feature>
<feature type="disulfide bond" evidence="3">
    <location>
        <begin position="52"/>
        <end position="94"/>
    </location>
</feature>
<feature type="disulfide bond" evidence="3">
    <location>
        <begin position="247"/>
        <end position="301"/>
    </location>
</feature>
<feature type="disulfide bond" evidence="3">
    <location>
        <begin position="345"/>
        <end position="386"/>
    </location>
</feature>
<feature type="disulfide bond" evidence="3">
    <location>
        <begin position="480"/>
        <end position="528"/>
    </location>
</feature>
<feature type="disulfide bond" evidence="3">
    <location>
        <begin position="568"/>
        <end position="622"/>
    </location>
</feature>
<keyword id="KW-0130">Cell adhesion</keyword>
<keyword id="KW-1015">Disulfide bond</keyword>
<keyword id="KW-0325">Glycoprotein</keyword>
<keyword id="KW-0393">Immunoglobulin domain</keyword>
<keyword id="KW-0472">Membrane</keyword>
<keyword id="KW-1185">Reference proteome</keyword>
<keyword id="KW-0677">Repeat</keyword>
<keyword id="KW-0732">Signal</keyword>
<keyword id="KW-0812">Transmembrane</keyword>
<keyword id="KW-1133">Transmembrane helix</keyword>
<evidence type="ECO:0000250" key="1">
    <source>
        <dbReference type="UniProtKB" id="O97394"/>
    </source>
</evidence>
<evidence type="ECO:0000255" key="2"/>
<evidence type="ECO:0000255" key="3">
    <source>
        <dbReference type="PROSITE-ProRule" id="PRU00114"/>
    </source>
</evidence>
<evidence type="ECO:0000255" key="4">
    <source>
        <dbReference type="PROSITE-ProRule" id="PRU00316"/>
    </source>
</evidence>
<evidence type="ECO:0000256" key="5">
    <source>
        <dbReference type="SAM" id="MobiDB-lite"/>
    </source>
</evidence>
<evidence type="ECO:0000269" key="6">
    <source>
    </source>
</evidence>
<evidence type="ECO:0000269" key="7">
    <source>
    </source>
</evidence>
<evidence type="ECO:0000305" key="8"/>
<proteinExistence type="evidence at protein level"/>
<protein>
    <recommendedName>
        <fullName>Protein sidekick homolog</fullName>
    </recommendedName>
    <alternativeName>
        <fullName>Neuronal IgCAM protein 4</fullName>
    </alternativeName>
</protein>